<reference key="1">
    <citation type="journal article" date="1996" name="Science">
        <title>Complete genome sequence of the methanogenic archaeon, Methanococcus jannaschii.</title>
        <authorList>
            <person name="Bult C.J."/>
            <person name="White O."/>
            <person name="Olsen G.J."/>
            <person name="Zhou L."/>
            <person name="Fleischmann R.D."/>
            <person name="Sutton G.G."/>
            <person name="Blake J.A."/>
            <person name="FitzGerald L.M."/>
            <person name="Clayton R.A."/>
            <person name="Gocayne J.D."/>
            <person name="Kerlavage A.R."/>
            <person name="Dougherty B.A."/>
            <person name="Tomb J.-F."/>
            <person name="Adams M.D."/>
            <person name="Reich C.I."/>
            <person name="Overbeek R."/>
            <person name="Kirkness E.F."/>
            <person name="Weinstock K.G."/>
            <person name="Merrick J.M."/>
            <person name="Glodek A."/>
            <person name="Scott J.L."/>
            <person name="Geoghagen N.S.M."/>
            <person name="Weidman J.F."/>
            <person name="Fuhrmann J.L."/>
            <person name="Nguyen D."/>
            <person name="Utterback T.R."/>
            <person name="Kelley J.M."/>
            <person name="Peterson J.D."/>
            <person name="Sadow P.W."/>
            <person name="Hanna M.C."/>
            <person name="Cotton M.D."/>
            <person name="Roberts K.M."/>
            <person name="Hurst M.A."/>
            <person name="Kaine B.P."/>
            <person name="Borodovsky M."/>
            <person name="Klenk H.-P."/>
            <person name="Fraser C.M."/>
            <person name="Smith H.O."/>
            <person name="Woese C.R."/>
            <person name="Venter J.C."/>
        </authorList>
    </citation>
    <scope>NUCLEOTIDE SEQUENCE [LARGE SCALE GENOMIC DNA]</scope>
    <source>
        <strain>ATCC 43067 / DSM 2661 / JAL-1 / JCM 10045 / NBRC 100440</strain>
    </source>
</reference>
<organism>
    <name type="scientific">Methanocaldococcus jannaschii (strain ATCC 43067 / DSM 2661 / JAL-1 / JCM 10045 / NBRC 100440)</name>
    <name type="common">Methanococcus jannaschii</name>
    <dbReference type="NCBI Taxonomy" id="243232"/>
    <lineage>
        <taxon>Archaea</taxon>
        <taxon>Methanobacteriati</taxon>
        <taxon>Methanobacteriota</taxon>
        <taxon>Methanomada group</taxon>
        <taxon>Methanococci</taxon>
        <taxon>Methanococcales</taxon>
        <taxon>Methanocaldococcaceae</taxon>
        <taxon>Methanocaldococcus</taxon>
    </lineage>
</organism>
<comment type="similarity">
    <text evidence="2">Belongs to the nitrite and sulfite reductase 4Fe-4S domain family.</text>
</comment>
<proteinExistence type="inferred from homology"/>
<name>Y551_METJA</name>
<sequence length="275" mass="31188">MVKRMHCNINLKYGVIMKKDCYTLRISLKPGFINAEQLKAIAYVIENFGDNKAHITTRQGIEFKISPEHLEEVEKILNNVGLNLGSTGNRVRQVVSCIGLECYNAIGDSVSLARRIHEEFEGVWVPRKVKINVSGCPNSCTFHRFCDIGICYRYKITINKEICTNCGKCKDFCDLNAIDWERKIIKDNCTGEGKCTGLCNAFKAERVISIFVGGKGGRIYKEGKHLIDLKNEDDVLFVIDELISLYAKFGKGRMADFVENYGIENLRNNIKELIK</sequence>
<keyword id="KW-0004">4Fe-4S</keyword>
<keyword id="KW-0349">Heme</keyword>
<keyword id="KW-0408">Iron</keyword>
<keyword id="KW-0411">Iron-sulfur</keyword>
<keyword id="KW-0479">Metal-binding</keyword>
<keyword id="KW-0560">Oxidoreductase</keyword>
<keyword id="KW-1185">Reference proteome</keyword>
<protein>
    <recommendedName>
        <fullName>Uncharacterized protein MJ0551</fullName>
    </recommendedName>
</protein>
<feature type="chain" id="PRO_0000199969" description="Uncharacterized protein MJ0551">
    <location>
        <begin position="1"/>
        <end position="275"/>
    </location>
</feature>
<feature type="binding site" evidence="1">
    <location>
        <position position="97"/>
    </location>
    <ligand>
        <name>[4Fe-4S] cluster</name>
        <dbReference type="ChEBI" id="CHEBI:49883"/>
    </ligand>
</feature>
<feature type="binding site" evidence="1">
    <location>
        <position position="102"/>
    </location>
    <ligand>
        <name>[4Fe-4S] cluster</name>
        <dbReference type="ChEBI" id="CHEBI:49883"/>
    </ligand>
</feature>
<feature type="binding site" evidence="1">
    <location>
        <position position="136"/>
    </location>
    <ligand>
        <name>[4Fe-4S] cluster</name>
        <dbReference type="ChEBI" id="CHEBI:49883"/>
    </ligand>
</feature>
<feature type="binding site" evidence="1">
    <location>
        <position position="140"/>
    </location>
    <ligand>
        <name>[4Fe-4S] cluster</name>
        <dbReference type="ChEBI" id="CHEBI:49883"/>
    </ligand>
</feature>
<feature type="binding site" description="axial binding residue" evidence="1">
    <location>
        <position position="140"/>
    </location>
    <ligand>
        <name>siroheme</name>
        <dbReference type="ChEBI" id="CHEBI:60052"/>
    </ligand>
    <ligandPart>
        <name>Fe</name>
        <dbReference type="ChEBI" id="CHEBI:18248"/>
    </ligandPart>
</feature>
<dbReference type="EMBL" id="L77117">
    <property type="protein sequence ID" value="AAB98543.1"/>
    <property type="molecule type" value="Genomic_DNA"/>
</dbReference>
<dbReference type="PIR" id="G64368">
    <property type="entry name" value="G64368"/>
</dbReference>
<dbReference type="SMR" id="Q57971"/>
<dbReference type="STRING" id="243232.MJ_0551"/>
<dbReference type="PaxDb" id="243232-MJ_0551"/>
<dbReference type="DNASU" id="1451416"/>
<dbReference type="EnsemblBacteria" id="AAB98543">
    <property type="protein sequence ID" value="AAB98543"/>
    <property type="gene ID" value="MJ_0551"/>
</dbReference>
<dbReference type="KEGG" id="mja:MJ_0551"/>
<dbReference type="eggNOG" id="arCOG02059">
    <property type="taxonomic scope" value="Archaea"/>
</dbReference>
<dbReference type="HOGENOM" id="CLU_072599_0_1_2"/>
<dbReference type="InParanoid" id="Q57971"/>
<dbReference type="PhylomeDB" id="Q57971"/>
<dbReference type="Proteomes" id="UP000000805">
    <property type="component" value="Chromosome"/>
</dbReference>
<dbReference type="GO" id="GO:0051539">
    <property type="term" value="F:4 iron, 4 sulfur cluster binding"/>
    <property type="evidence" value="ECO:0007669"/>
    <property type="project" value="UniProtKB-KW"/>
</dbReference>
<dbReference type="GO" id="GO:0020037">
    <property type="term" value="F:heme binding"/>
    <property type="evidence" value="ECO:0007669"/>
    <property type="project" value="InterPro"/>
</dbReference>
<dbReference type="GO" id="GO:0046872">
    <property type="term" value="F:metal ion binding"/>
    <property type="evidence" value="ECO:0007669"/>
    <property type="project" value="UniProtKB-KW"/>
</dbReference>
<dbReference type="GO" id="GO:0016491">
    <property type="term" value="F:oxidoreductase activity"/>
    <property type="evidence" value="ECO:0007669"/>
    <property type="project" value="UniProtKB-KW"/>
</dbReference>
<dbReference type="Gene3D" id="3.30.70.20">
    <property type="match status" value="1"/>
</dbReference>
<dbReference type="Gene3D" id="3.30.413.10">
    <property type="entry name" value="Sulfite Reductase Hemoprotein, domain 1"/>
    <property type="match status" value="1"/>
</dbReference>
<dbReference type="InterPro" id="IPR017896">
    <property type="entry name" value="4Fe4S_Fe-S-bd"/>
</dbReference>
<dbReference type="InterPro" id="IPR005117">
    <property type="entry name" value="NiRdtase/SiRdtase_haem-b_fer"/>
</dbReference>
<dbReference type="InterPro" id="IPR036136">
    <property type="entry name" value="Nit/Sulf_reduc_fer-like_dom_sf"/>
</dbReference>
<dbReference type="InterPro" id="IPR006067">
    <property type="entry name" value="NO2/SO3_Rdtase_4Fe4S_dom"/>
</dbReference>
<dbReference type="InterPro" id="IPR045169">
    <property type="entry name" value="NO2/SO3_Rdtase_4Fe4S_prot"/>
</dbReference>
<dbReference type="InterPro" id="IPR045854">
    <property type="entry name" value="NO2/SO3_Rdtase_4Fe4S_sf"/>
</dbReference>
<dbReference type="InterPro" id="IPR006066">
    <property type="entry name" value="NO2/SO3_Rdtase_FeS/sirohaem_BS"/>
</dbReference>
<dbReference type="PANTHER" id="PTHR11493:SF54">
    <property type="entry name" value="ANAEROBIC SULFITE REDUCTASE SUBUNIT C"/>
    <property type="match status" value="1"/>
</dbReference>
<dbReference type="PANTHER" id="PTHR11493">
    <property type="entry name" value="SULFITE REDUCTASE [NADPH] SUBUNIT BETA-RELATED"/>
    <property type="match status" value="1"/>
</dbReference>
<dbReference type="Pfam" id="PF01077">
    <property type="entry name" value="NIR_SIR"/>
    <property type="match status" value="1"/>
</dbReference>
<dbReference type="Pfam" id="PF03460">
    <property type="entry name" value="NIR_SIR_ferr"/>
    <property type="match status" value="1"/>
</dbReference>
<dbReference type="SUPFAM" id="SSF54862">
    <property type="entry name" value="4Fe-4S ferredoxins"/>
    <property type="match status" value="1"/>
</dbReference>
<dbReference type="SUPFAM" id="SSF56014">
    <property type="entry name" value="Nitrite and sulphite reductase 4Fe-4S domain-like"/>
    <property type="match status" value="1"/>
</dbReference>
<dbReference type="SUPFAM" id="SSF55124">
    <property type="entry name" value="Nitrite/Sulfite reductase N-terminal domain-like"/>
    <property type="match status" value="1"/>
</dbReference>
<dbReference type="PROSITE" id="PS51379">
    <property type="entry name" value="4FE4S_FER_2"/>
    <property type="match status" value="1"/>
</dbReference>
<dbReference type="PROSITE" id="PS00365">
    <property type="entry name" value="NIR_SIR"/>
    <property type="match status" value="1"/>
</dbReference>
<accession>Q57971</accession>
<evidence type="ECO:0000250" key="1"/>
<evidence type="ECO:0000305" key="2"/>
<gene>
    <name type="ordered locus">MJ0551</name>
</gene>